<proteinExistence type="inferred from homology"/>
<evidence type="ECO:0000250" key="1"/>
<evidence type="ECO:0000250" key="2">
    <source>
        <dbReference type="UniProtKB" id="Q9X1H9"/>
    </source>
</evidence>
<evidence type="ECO:0000255" key="3">
    <source>
        <dbReference type="PROSITE-ProRule" id="PRU00815"/>
    </source>
</evidence>
<comment type="function">
    <text evidence="1">May bind long-chain fatty acids, such as palmitate, and may play a role in lipid transport or fatty acid metabolism.</text>
</comment>
<name>Y1149_STRPQ</name>
<sequence length="279" mass="29982">MGTIKIVTDSSITIEPELIKALDITVVPLSVMIDSKLYSDNDLKEEGHFLSLMKASKSLPKTSQPPVGLFAETYENLVKKGVTDIVAIHLSPALSGTIEASRQGAEIAETPVTVLDSGFTDQAMKFQVVEAAKMAKAGASLNEILAAVQAIKSKTELYIGVSTLENLVKGGRIGRVTGVLSSLLNVKVVMALKNDELKTLVKGRGNKTFTKWLDSYLAKNSHRPIAEIAISYAGEASLALTLKERIAAYYNHSISVLETGSIIQTHTGEGAFAVMVRYE</sequence>
<gene>
    <name type="ordered locus">SPs0713</name>
</gene>
<protein>
    <recommendedName>
        <fullName>DegV domain-containing protein SPs0713</fullName>
    </recommendedName>
</protein>
<feature type="chain" id="PRO_0000411315" description="DegV domain-containing protein SPs0713">
    <location>
        <begin position="1"/>
        <end position="279"/>
    </location>
</feature>
<feature type="domain" description="DegV" evidence="3">
    <location>
        <begin position="4"/>
        <end position="278"/>
    </location>
</feature>
<feature type="binding site" evidence="2">
    <location>
        <position position="62"/>
    </location>
    <ligand>
        <name>hexadecanoate</name>
        <dbReference type="ChEBI" id="CHEBI:7896"/>
    </ligand>
</feature>
<feature type="binding site" evidence="2">
    <location>
        <position position="95"/>
    </location>
    <ligand>
        <name>hexadecanoate</name>
        <dbReference type="ChEBI" id="CHEBI:7896"/>
    </ligand>
</feature>
<keyword id="KW-0446">Lipid-binding</keyword>
<reference key="1">
    <citation type="journal article" date="2003" name="Genome Res.">
        <title>Genome sequence of an M3 strain of Streptococcus pyogenes reveals a large-scale genomic rearrangement in invasive strains and new insights into phage evolution.</title>
        <authorList>
            <person name="Nakagawa I."/>
            <person name="Kurokawa K."/>
            <person name="Yamashita A."/>
            <person name="Nakata M."/>
            <person name="Tomiyasu Y."/>
            <person name="Okahashi N."/>
            <person name="Kawabata S."/>
            <person name="Yamazaki K."/>
            <person name="Shiba T."/>
            <person name="Yasunaga T."/>
            <person name="Hayashi H."/>
            <person name="Hattori M."/>
            <person name="Hamada S."/>
        </authorList>
    </citation>
    <scope>NUCLEOTIDE SEQUENCE [LARGE SCALE GENOMIC DNA]</scope>
    <source>
        <strain>SSI-1</strain>
    </source>
</reference>
<dbReference type="EMBL" id="BA000034">
    <property type="protein sequence ID" value="BAC63808.1"/>
    <property type="molecule type" value="Genomic_DNA"/>
</dbReference>
<dbReference type="RefSeq" id="WP_011054703.1">
    <property type="nucleotide sequence ID" value="NC_004606.1"/>
</dbReference>
<dbReference type="SMR" id="P0DA55"/>
<dbReference type="KEGG" id="sps:SPs0713"/>
<dbReference type="HOGENOM" id="CLU_048251_3_2_9"/>
<dbReference type="GO" id="GO:0008289">
    <property type="term" value="F:lipid binding"/>
    <property type="evidence" value="ECO:0007669"/>
    <property type="project" value="UniProtKB-KW"/>
</dbReference>
<dbReference type="Gene3D" id="3.30.1180.10">
    <property type="match status" value="1"/>
</dbReference>
<dbReference type="Gene3D" id="3.40.50.10170">
    <property type="match status" value="1"/>
</dbReference>
<dbReference type="InterPro" id="IPR003797">
    <property type="entry name" value="DegV"/>
</dbReference>
<dbReference type="InterPro" id="IPR043168">
    <property type="entry name" value="DegV_C"/>
</dbReference>
<dbReference type="InterPro" id="IPR050270">
    <property type="entry name" value="DegV_domain_contain"/>
</dbReference>
<dbReference type="NCBIfam" id="TIGR00762">
    <property type="entry name" value="DegV"/>
    <property type="match status" value="1"/>
</dbReference>
<dbReference type="PANTHER" id="PTHR33434">
    <property type="entry name" value="DEGV DOMAIN-CONTAINING PROTEIN DR_1986-RELATED"/>
    <property type="match status" value="1"/>
</dbReference>
<dbReference type="PANTHER" id="PTHR33434:SF8">
    <property type="entry name" value="DEGV DOMAIN-CONTAINING PROTEIN SPR1019"/>
    <property type="match status" value="1"/>
</dbReference>
<dbReference type="Pfam" id="PF02645">
    <property type="entry name" value="DegV"/>
    <property type="match status" value="1"/>
</dbReference>
<dbReference type="SUPFAM" id="SSF82549">
    <property type="entry name" value="DAK1/DegV-like"/>
    <property type="match status" value="1"/>
</dbReference>
<dbReference type="PROSITE" id="PS51482">
    <property type="entry name" value="DEGV"/>
    <property type="match status" value="1"/>
</dbReference>
<organism>
    <name type="scientific">Streptococcus pyogenes serotype M3 (strain SSI-1)</name>
    <dbReference type="NCBI Taxonomy" id="193567"/>
    <lineage>
        <taxon>Bacteria</taxon>
        <taxon>Bacillati</taxon>
        <taxon>Bacillota</taxon>
        <taxon>Bacilli</taxon>
        <taxon>Lactobacillales</taxon>
        <taxon>Streptococcaceae</taxon>
        <taxon>Streptococcus</taxon>
    </lineage>
</organism>
<accession>P0DA55</accession>
<accession>Q8K6T3</accession>